<evidence type="ECO:0000250" key="1">
    <source>
        <dbReference type="UniProtKB" id="Q2FYQ7"/>
    </source>
</evidence>
<evidence type="ECO:0000255" key="2">
    <source>
        <dbReference type="PROSITE-ProRule" id="PRU00434"/>
    </source>
</evidence>
<evidence type="ECO:0000305" key="3"/>
<proteinExistence type="inferred from homology"/>
<protein>
    <recommendedName>
        <fullName evidence="1">Nickel import system ATP-binding protein NikD</fullName>
        <ecNumber evidence="1">7.2.2.11</ecNumber>
    </recommendedName>
</protein>
<accession>Q5HG40</accession>
<comment type="function">
    <text evidence="1">Part of the ABC transporter complex NikABCDE (Opp2) involved in nickel import. Probably responsible for energy coupling to the transport system.</text>
</comment>
<comment type="catalytic activity">
    <reaction evidence="1">
        <text>Ni(2+)(out) + ATP + H2O = Ni(2+)(in) + ADP + phosphate + H(+)</text>
        <dbReference type="Rhea" id="RHEA:15557"/>
        <dbReference type="ChEBI" id="CHEBI:15377"/>
        <dbReference type="ChEBI" id="CHEBI:15378"/>
        <dbReference type="ChEBI" id="CHEBI:30616"/>
        <dbReference type="ChEBI" id="CHEBI:43474"/>
        <dbReference type="ChEBI" id="CHEBI:49786"/>
        <dbReference type="ChEBI" id="CHEBI:456216"/>
        <dbReference type="EC" id="7.2.2.11"/>
    </reaction>
    <physiologicalReaction direction="left-to-right" evidence="1">
        <dbReference type="Rhea" id="RHEA:15558"/>
    </physiologicalReaction>
</comment>
<comment type="subunit">
    <text evidence="1">The complex is composed of two ATP-binding proteins (NikD and NikE), two transmembrane proteins (NikB and NikC) and a solute-binding protein (NikA).</text>
</comment>
<comment type="subcellular location">
    <subcellularLocation>
        <location evidence="3">Cell membrane</location>
        <topology evidence="3">Peripheral membrane protein</topology>
    </subcellularLocation>
</comment>
<comment type="similarity">
    <text evidence="3">Belongs to the ABC transporter superfamily.</text>
</comment>
<keyword id="KW-0067">ATP-binding</keyword>
<keyword id="KW-1003">Cell membrane</keyword>
<keyword id="KW-0406">Ion transport</keyword>
<keyword id="KW-0472">Membrane</keyword>
<keyword id="KW-0533">Nickel</keyword>
<keyword id="KW-0921">Nickel transport</keyword>
<keyword id="KW-0547">Nucleotide-binding</keyword>
<keyword id="KW-1278">Translocase</keyword>
<keyword id="KW-0813">Transport</keyword>
<sequence>MSLIDIQNLTIKNTSEKSLIKGIDLKIFSQQINALIGESGAGKSLIAKALLEYLPFDLSCTYDSYQFDGENVSRLSQYYGHTIGYISQNYAESFNDHTKLGKQLTAIYRKHYKGSKEEALSKVDKALSWVNLQSKDILNKYSFQLSGGQLERVYIASVLMLEPKLIIADEPVASLDALNGNQVMDLLQHIVLEHGQTLFIITHNLSHVLKYCQYIYVLKEGQIIERGNINHFKYEHLHPYTERLIKYRTQLKRDYYD</sequence>
<gene>
    <name evidence="1" type="primary">nikD</name>
    <name type="synonym">oppD2</name>
    <name type="ordered locus">SACOL1415</name>
</gene>
<organism>
    <name type="scientific">Staphylococcus aureus (strain COL)</name>
    <dbReference type="NCBI Taxonomy" id="93062"/>
    <lineage>
        <taxon>Bacteria</taxon>
        <taxon>Bacillati</taxon>
        <taxon>Bacillota</taxon>
        <taxon>Bacilli</taxon>
        <taxon>Bacillales</taxon>
        <taxon>Staphylococcaceae</taxon>
        <taxon>Staphylococcus</taxon>
    </lineage>
</organism>
<reference key="1">
    <citation type="journal article" date="2005" name="J. Bacteriol.">
        <title>Insights on evolution of virulence and resistance from the complete genome analysis of an early methicillin-resistant Staphylococcus aureus strain and a biofilm-producing methicillin-resistant Staphylococcus epidermidis strain.</title>
        <authorList>
            <person name="Gill S.R."/>
            <person name="Fouts D.E."/>
            <person name="Archer G.L."/>
            <person name="Mongodin E.F."/>
            <person name="DeBoy R.T."/>
            <person name="Ravel J."/>
            <person name="Paulsen I.T."/>
            <person name="Kolonay J.F."/>
            <person name="Brinkac L.M."/>
            <person name="Beanan M.J."/>
            <person name="Dodson R.J."/>
            <person name="Daugherty S.C."/>
            <person name="Madupu R."/>
            <person name="Angiuoli S.V."/>
            <person name="Durkin A.S."/>
            <person name="Haft D.H."/>
            <person name="Vamathevan J.J."/>
            <person name="Khouri H."/>
            <person name="Utterback T.R."/>
            <person name="Lee C."/>
            <person name="Dimitrov G."/>
            <person name="Jiang L."/>
            <person name="Qin H."/>
            <person name="Weidman J."/>
            <person name="Tran K."/>
            <person name="Kang K.H."/>
            <person name="Hance I.R."/>
            <person name="Nelson K.E."/>
            <person name="Fraser C.M."/>
        </authorList>
    </citation>
    <scope>NUCLEOTIDE SEQUENCE [LARGE SCALE GENOMIC DNA]</scope>
    <source>
        <strain>COL</strain>
    </source>
</reference>
<dbReference type="EC" id="7.2.2.11" evidence="1"/>
<dbReference type="EMBL" id="CP000046">
    <property type="protein sequence ID" value="AAW38160.1"/>
    <property type="molecule type" value="Genomic_DNA"/>
</dbReference>
<dbReference type="RefSeq" id="WP_000052317.1">
    <property type="nucleotide sequence ID" value="NZ_JBGOFO010000003.1"/>
</dbReference>
<dbReference type="SMR" id="Q5HG40"/>
<dbReference type="KEGG" id="sac:SACOL1415"/>
<dbReference type="HOGENOM" id="CLU_000604_1_23_9"/>
<dbReference type="Proteomes" id="UP000000530">
    <property type="component" value="Chromosome"/>
</dbReference>
<dbReference type="GO" id="GO:0005886">
    <property type="term" value="C:plasma membrane"/>
    <property type="evidence" value="ECO:0007669"/>
    <property type="project" value="UniProtKB-SubCell"/>
</dbReference>
<dbReference type="GO" id="GO:0015413">
    <property type="term" value="F:ABC-type nickel transporter activity"/>
    <property type="evidence" value="ECO:0007669"/>
    <property type="project" value="UniProtKB-EC"/>
</dbReference>
<dbReference type="GO" id="GO:0005524">
    <property type="term" value="F:ATP binding"/>
    <property type="evidence" value="ECO:0007669"/>
    <property type="project" value="UniProtKB-KW"/>
</dbReference>
<dbReference type="GO" id="GO:0016887">
    <property type="term" value="F:ATP hydrolysis activity"/>
    <property type="evidence" value="ECO:0007669"/>
    <property type="project" value="InterPro"/>
</dbReference>
<dbReference type="FunFam" id="3.40.50.300:FF:001826">
    <property type="entry name" value="Nickel import system ATP-binding protein NikD"/>
    <property type="match status" value="1"/>
</dbReference>
<dbReference type="Gene3D" id="3.40.50.300">
    <property type="entry name" value="P-loop containing nucleotide triphosphate hydrolases"/>
    <property type="match status" value="1"/>
</dbReference>
<dbReference type="InterPro" id="IPR003593">
    <property type="entry name" value="AAA+_ATPase"/>
</dbReference>
<dbReference type="InterPro" id="IPR050388">
    <property type="entry name" value="ABC_Ni/Peptide_Import"/>
</dbReference>
<dbReference type="InterPro" id="IPR003439">
    <property type="entry name" value="ABC_transporter-like_ATP-bd"/>
</dbReference>
<dbReference type="InterPro" id="IPR027417">
    <property type="entry name" value="P-loop_NTPase"/>
</dbReference>
<dbReference type="PANTHER" id="PTHR43297:SF13">
    <property type="entry name" value="NICKEL ABC TRANSPORTER, ATP-BINDING PROTEIN"/>
    <property type="match status" value="1"/>
</dbReference>
<dbReference type="PANTHER" id="PTHR43297">
    <property type="entry name" value="OLIGOPEPTIDE TRANSPORT ATP-BINDING PROTEIN APPD"/>
    <property type="match status" value="1"/>
</dbReference>
<dbReference type="Pfam" id="PF00005">
    <property type="entry name" value="ABC_tran"/>
    <property type="match status" value="1"/>
</dbReference>
<dbReference type="SMART" id="SM00382">
    <property type="entry name" value="AAA"/>
    <property type="match status" value="1"/>
</dbReference>
<dbReference type="SUPFAM" id="SSF52540">
    <property type="entry name" value="P-loop containing nucleoside triphosphate hydrolases"/>
    <property type="match status" value="1"/>
</dbReference>
<dbReference type="PROSITE" id="PS50893">
    <property type="entry name" value="ABC_TRANSPORTER_2"/>
    <property type="match status" value="1"/>
</dbReference>
<feature type="chain" id="PRO_0000276793" description="Nickel import system ATP-binding protein NikD">
    <location>
        <begin position="1"/>
        <end position="257"/>
    </location>
</feature>
<feature type="domain" description="ABC transporter" evidence="2">
    <location>
        <begin position="4"/>
        <end position="245"/>
    </location>
</feature>
<feature type="binding site" evidence="2">
    <location>
        <begin position="37"/>
        <end position="44"/>
    </location>
    <ligand>
        <name>ATP</name>
        <dbReference type="ChEBI" id="CHEBI:30616"/>
    </ligand>
</feature>
<name>NIKD_STAAC</name>